<gene>
    <name evidence="2 6" type="primary">sorf-1</name>
    <name evidence="6" type="ORF">ZK563.5</name>
</gene>
<organism evidence="5">
    <name type="scientific">Caenorhabditis elegans</name>
    <dbReference type="NCBI Taxonomy" id="6239"/>
    <lineage>
        <taxon>Eukaryota</taxon>
        <taxon>Metazoa</taxon>
        <taxon>Ecdysozoa</taxon>
        <taxon>Nematoda</taxon>
        <taxon>Chromadorea</taxon>
        <taxon>Rhabditida</taxon>
        <taxon>Rhabditina</taxon>
        <taxon>Rhabditomorpha</taxon>
        <taxon>Rhabditoidea</taxon>
        <taxon>Rhabditidae</taxon>
        <taxon>Peloderinae</taxon>
        <taxon>Caenorhabditis</taxon>
    </lineage>
</organism>
<feature type="chain" id="PRO_0000440674" description="Suppressor of organelle fusion 1" evidence="3">
    <location>
        <begin position="1"/>
        <end position="239"/>
    </location>
</feature>
<comment type="function">
    <text evidence="1">Together with sorf-2 negatively regulates the levels of phosphatidylinositol 3-phosphate (PtdIns3P) to enable the conversion of early endosomes to late endosomes. Binds to sorf-2 and the sorf-1-sorf-2 complex likely acts through bec-1, a non-catalytic subunit of phosphatidylinositol 3-kinase (PI3K), to suppress PI3K activity, thereby negatively regulating endosomal PtdIns3P levels.</text>
</comment>
<comment type="subunit">
    <text evidence="1">Interacts with sorf-2; the interaction is direct. Interacts with bec-1.</text>
</comment>
<comment type="interaction">
    <interactant intactId="EBI-13941886">
        <id>Q23533</id>
    </interactant>
    <interactant intactId="EBI-2413500">
        <id>Q22592</id>
        <label>bec-1</label>
    </interactant>
    <organismsDiffer>false</organismsDiffer>
    <experiments>3</experiments>
</comment>
<comment type="interaction">
    <interactant intactId="EBI-13941886">
        <id>Q23533</id>
    </interactant>
    <interactant intactId="EBI-13941960">
        <id>Q10122</id>
        <label>sorf-2</label>
    </interactant>
    <organismsDiffer>false</organismsDiffer>
    <experiments>2</experiments>
</comment>
<comment type="subcellular location">
    <subcellularLocation>
        <location evidence="4">Early endosome</location>
    </subcellularLocation>
    <subcellularLocation>
        <location evidence="4">Late endosome</location>
    </subcellularLocation>
    <subcellularLocation>
        <location evidence="1">Cytoplasm</location>
    </subcellularLocation>
</comment>
<comment type="disruption phenotype">
    <text evidence="1">Coelomocytes contain larger early and late endosomes enriched with PtdIns3P. Delayed conversion of early endosomes to late endosomes with early endosomes retaining PtdInsP3 for a longer duration of time which may possibly be due to a delay in either the turnover or transport of PtdIns3P out of the endosome. This leads to continuous fusion of early endosomes which continues until rab-5 is displaced and rab-7 is recruited. Double knockout with sorf-2 results in a similar phenotype as the individual single sorf-1 knockout. Double knockout with bec-1 results in smaller endosomes and an irregular distribution pattern of PtdIns3P in the cytoplasm. Double knockout with vps-11, vps-18 or vps-39, subunits of the CORVET/HOPS complex, results in larger endosomes and larger lysosomes and thus suppresses the endosome/lysosome fusion defects in coelomocytes of the individual vps-11, vps-18 and vps-39 single mutants. Likewise, RNAi-mediated knockdown in a vps-41 mutant background (a subunit of the CORVET/HOPS complex) also suppresses the endosome/lysosome fusion defects in the vps-41 single mutant. However, double knockout with the CORVET/HOPS complex subunits vps-16 or vps-33.1, does not suppress the endosome/lysosome fusion defects in coelomocytes of the individual vps-16 and vps-33.1 single mutants. Double knockout with proteins involved in rab-5 to rab-7 switching in early to late endosome conversion such as rab-7, sand-1 and tbc-2 results in enlarged vacuoles, delayed endosomal cargo transport and persistent PtdIns3P in early endosomes in coelomocytes.</text>
</comment>
<comment type="similarity">
    <text evidence="3">Belongs to the WD repeat WDR91 family.</text>
</comment>
<dbReference type="EMBL" id="BX284606">
    <property type="protein sequence ID" value="CCD63045.1"/>
    <property type="molecule type" value="Genomic_DNA"/>
</dbReference>
<dbReference type="PIR" id="T27917">
    <property type="entry name" value="T27917"/>
</dbReference>
<dbReference type="RefSeq" id="NP_508584.3">
    <property type="nucleotide sequence ID" value="NM_076183.6"/>
</dbReference>
<dbReference type="ComplexPortal" id="CPX-1059">
    <property type="entry name" value="Sorf-1-Sorf-2 complex"/>
</dbReference>
<dbReference type="FunCoup" id="Q23533">
    <property type="interactions" value="31"/>
</dbReference>
<dbReference type="IntAct" id="Q23533">
    <property type="interactions" value="2"/>
</dbReference>
<dbReference type="STRING" id="6239.ZK563.5.2"/>
<dbReference type="PaxDb" id="6239-ZK563.5"/>
<dbReference type="EnsemblMetazoa" id="ZK563.5.1">
    <property type="protein sequence ID" value="ZK563.5.1"/>
    <property type="gene ID" value="WBGene00022769"/>
</dbReference>
<dbReference type="EnsemblMetazoa" id="ZK563.5.2">
    <property type="protein sequence ID" value="ZK563.5.2"/>
    <property type="gene ID" value="WBGene00022769"/>
</dbReference>
<dbReference type="GeneID" id="180626"/>
<dbReference type="KEGG" id="cel:CELE_ZK563.5"/>
<dbReference type="UCSC" id="ZK563.5">
    <property type="organism name" value="c. elegans"/>
</dbReference>
<dbReference type="AGR" id="WB:WBGene00022769"/>
<dbReference type="CTD" id="180626"/>
<dbReference type="WormBase" id="ZK563.5">
    <property type="protein sequence ID" value="CE35817"/>
    <property type="gene ID" value="WBGene00022769"/>
    <property type="gene designation" value="sorf-1"/>
</dbReference>
<dbReference type="eggNOG" id="KOG1333">
    <property type="taxonomic scope" value="Eukaryota"/>
</dbReference>
<dbReference type="GeneTree" id="ENSGT00390000001566"/>
<dbReference type="HOGENOM" id="CLU_1002233_0_0_1"/>
<dbReference type="InParanoid" id="Q23533"/>
<dbReference type="OMA" id="TWIEIYY"/>
<dbReference type="OrthoDB" id="193023at2759"/>
<dbReference type="PhylomeDB" id="Q23533"/>
<dbReference type="PRO" id="PR:Q23533"/>
<dbReference type="Proteomes" id="UP000001940">
    <property type="component" value="Chromosome X"/>
</dbReference>
<dbReference type="Bgee" id="WBGene00022769">
    <property type="expression patterns" value="Expressed in pharyngeal muscle cell (C elegans) and 4 other cell types or tissues"/>
</dbReference>
<dbReference type="GO" id="GO:0005829">
    <property type="term" value="C:cytosol"/>
    <property type="evidence" value="ECO:0000250"/>
    <property type="project" value="UniProtKB"/>
</dbReference>
<dbReference type="GO" id="GO:0005769">
    <property type="term" value="C:early endosome"/>
    <property type="evidence" value="ECO:0000314"/>
    <property type="project" value="UniProtKB"/>
</dbReference>
<dbReference type="GO" id="GO:0031905">
    <property type="term" value="C:early endosome lumen"/>
    <property type="evidence" value="ECO:0000314"/>
    <property type="project" value="ComplexPortal"/>
</dbReference>
<dbReference type="GO" id="GO:0031901">
    <property type="term" value="C:early endosome membrane"/>
    <property type="evidence" value="ECO:0000250"/>
    <property type="project" value="UniProtKB"/>
</dbReference>
<dbReference type="GO" id="GO:0010008">
    <property type="term" value="C:endosome membrane"/>
    <property type="evidence" value="ECO:0000250"/>
    <property type="project" value="UniProtKB"/>
</dbReference>
<dbReference type="GO" id="GO:0005770">
    <property type="term" value="C:late endosome"/>
    <property type="evidence" value="ECO:0000314"/>
    <property type="project" value="UniProtKB"/>
</dbReference>
<dbReference type="GO" id="GO:0031906">
    <property type="term" value="C:late endosome lumen"/>
    <property type="evidence" value="ECO:0000314"/>
    <property type="project" value="ComplexPortal"/>
</dbReference>
<dbReference type="GO" id="GO:0031902">
    <property type="term" value="C:late endosome membrane"/>
    <property type="evidence" value="ECO:0000250"/>
    <property type="project" value="UniProtKB"/>
</dbReference>
<dbReference type="GO" id="GO:0141039">
    <property type="term" value="F:phosphatidylinositol 3-kinase inhibitor activity"/>
    <property type="evidence" value="ECO:0000250"/>
    <property type="project" value="UniProtKB"/>
</dbReference>
<dbReference type="GO" id="GO:0045022">
    <property type="term" value="P:early endosome to late endosome transport"/>
    <property type="evidence" value="ECO:0000250"/>
    <property type="project" value="UniProtKB"/>
</dbReference>
<dbReference type="GO" id="GO:0016197">
    <property type="term" value="P:endosomal transport"/>
    <property type="evidence" value="ECO:0000314"/>
    <property type="project" value="ComplexPortal"/>
</dbReference>
<dbReference type="GO" id="GO:0051898">
    <property type="term" value="P:negative regulation of phosphatidylinositol 3-kinase/protein kinase B signal transduction"/>
    <property type="evidence" value="ECO:0007669"/>
    <property type="project" value="InterPro"/>
</dbReference>
<dbReference type="GO" id="GO:0048284">
    <property type="term" value="P:organelle fusion"/>
    <property type="evidence" value="ECO:0000316"/>
    <property type="project" value="UniProtKB"/>
</dbReference>
<dbReference type="GO" id="GO:2000643">
    <property type="term" value="P:positive regulation of early endosome to late endosome transport"/>
    <property type="evidence" value="ECO:0000315"/>
    <property type="project" value="UniProtKB"/>
</dbReference>
<dbReference type="InterPro" id="IPR056327">
    <property type="entry name" value="ARMC9_CTLH-like_dom"/>
</dbReference>
<dbReference type="InterPro" id="IPR039724">
    <property type="entry name" value="WDR91"/>
</dbReference>
<dbReference type="PANTHER" id="PTHR13083">
    <property type="entry name" value="WD REPEAT-CONTAINING PROTEIN 91"/>
    <property type="match status" value="1"/>
</dbReference>
<dbReference type="PANTHER" id="PTHR13083:SF3">
    <property type="entry name" value="WD REPEAT-CONTAINING PROTEIN 91"/>
    <property type="match status" value="1"/>
</dbReference>
<dbReference type="Pfam" id="PF23138">
    <property type="entry name" value="CTLH_Armc9"/>
    <property type="match status" value="1"/>
</dbReference>
<evidence type="ECO:0000269" key="1">
    <source>
    </source>
</evidence>
<evidence type="ECO:0000303" key="2">
    <source>
    </source>
</evidence>
<evidence type="ECO:0000305" key="3"/>
<evidence type="ECO:0000305" key="4">
    <source>
    </source>
</evidence>
<evidence type="ECO:0000312" key="5">
    <source>
        <dbReference type="Proteomes" id="UP000001940"/>
    </source>
</evidence>
<evidence type="ECO:0000312" key="6">
    <source>
        <dbReference type="WormBase" id="ZK563.5"/>
    </source>
</evidence>
<name>SORF1_CAEEL</name>
<reference evidence="5" key="1">
    <citation type="journal article" date="1998" name="Science">
        <title>Genome sequence of the nematode C. elegans: a platform for investigating biology.</title>
        <authorList>
            <consortium name="The C. elegans sequencing consortium"/>
        </authorList>
    </citation>
    <scope>NUCLEOTIDE SEQUENCE [LARGE SCALE GENOMIC DNA]</scope>
    <source>
        <strain evidence="5">Bristol N2</strain>
    </source>
</reference>
<reference evidence="3" key="2">
    <citation type="journal article" date="2016" name="J. Cell Biol.">
        <title>Negative regulation of phosphatidylinositol 3-phosphate levels in early-to-late endosome conversion.</title>
        <authorList>
            <person name="Liu K."/>
            <person name="Jian Y."/>
            <person name="Sun X."/>
            <person name="Yang C."/>
            <person name="Gao Z."/>
            <person name="Zhang Z."/>
            <person name="Liu X."/>
            <person name="Li Y."/>
            <person name="Xu J."/>
            <person name="Jing Y."/>
            <person name="Mitani S."/>
            <person name="He S."/>
            <person name="Yang C."/>
        </authorList>
    </citation>
    <scope>FUNCTION</scope>
    <scope>INTERACTION WITH SORF-2 AND BEC-1</scope>
    <scope>SUBCELLULAR LOCATION</scope>
    <scope>DISRUPTION PHENOTYPE</scope>
</reference>
<reference key="3">
    <citation type="journal article" date="2016" name="J. Cell Biol.">
        <title>Correction: Negative regulation of phosphatidylinositol 3-phosphate levels in early-to-late endosome conversion.</title>
        <authorList>
            <person name="Liu K."/>
            <person name="Jian Y."/>
            <person name="Sun X."/>
            <person name="Yang C."/>
            <person name="Gao Z."/>
            <person name="Zhang Z."/>
            <person name="Liu X."/>
            <person name="Li Y."/>
            <person name="Xu J."/>
            <person name="Jing Y."/>
            <person name="Mitani S."/>
            <person name="He S."/>
            <person name="Yang C."/>
        </authorList>
    </citation>
    <scope>ERRATUM OF PUBMED:26783301</scope>
</reference>
<accession>Q23533</accession>
<keyword id="KW-0963">Cytoplasm</keyword>
<keyword id="KW-0967">Endosome</keyword>
<keyword id="KW-1185">Reference proteome</keyword>
<proteinExistence type="evidence at protein level"/>
<protein>
    <recommendedName>
        <fullName evidence="2">Suppressor of organelle fusion 1</fullName>
    </recommendedName>
</protein>
<sequence length="239" mass="27242">MSHVSNSTDEVVRNYLAAKSMVTSLKAFDQESSFAKEANYQVDRCIDEMTDAIDKHDVDTLCAMWESWNARVFHSLDTEGIKQAQCYEASAYRLFLVRCVQKKNISKCNEFFRKMSSLTLNNPQWADWFAFPYNHHAKDTEPFRKYFDKTWIEIYYVSLHNFLSTSLANVSPSVIGTIVEGIARDPTGNDHVDFDEDLIDDFAVIAQCSAPVKRGHSKPSLRNLLKSLTSSKKPSPSTD</sequence>